<name>CBID_SALNS</name>
<accession>B4SX00</accession>
<feature type="chain" id="PRO_1000133746" description="Cobalt-precorrin-5B C(1)-methyltransferase">
    <location>
        <begin position="1"/>
        <end position="379"/>
    </location>
</feature>
<protein>
    <recommendedName>
        <fullName evidence="1">Cobalt-precorrin-5B C(1)-methyltransferase</fullName>
        <ecNumber evidence="1">2.1.1.195</ecNumber>
    </recommendedName>
    <alternativeName>
        <fullName evidence="1">Cobalt-precorrin-6A synthase</fullName>
    </alternativeName>
</protein>
<evidence type="ECO:0000255" key="1">
    <source>
        <dbReference type="HAMAP-Rule" id="MF_00787"/>
    </source>
</evidence>
<dbReference type="EC" id="2.1.1.195" evidence="1"/>
<dbReference type="EMBL" id="CP001113">
    <property type="protein sequence ID" value="ACF64809.1"/>
    <property type="molecule type" value="Genomic_DNA"/>
</dbReference>
<dbReference type="RefSeq" id="WP_001292908.1">
    <property type="nucleotide sequence ID" value="NZ_CCMR01000002.1"/>
</dbReference>
<dbReference type="SMR" id="B4SX00"/>
<dbReference type="KEGG" id="see:SNSL254_A2208"/>
<dbReference type="HOGENOM" id="CLU_041273_1_0_6"/>
<dbReference type="UniPathway" id="UPA00148">
    <property type="reaction ID" value="UER00227"/>
</dbReference>
<dbReference type="Proteomes" id="UP000008824">
    <property type="component" value="Chromosome"/>
</dbReference>
<dbReference type="GO" id="GO:0043780">
    <property type="term" value="F:cobalt-precorrin-5B C1-methyltransferase activity"/>
    <property type="evidence" value="ECO:0007669"/>
    <property type="project" value="RHEA"/>
</dbReference>
<dbReference type="GO" id="GO:0019251">
    <property type="term" value="P:anaerobic cobalamin biosynthetic process"/>
    <property type="evidence" value="ECO:0007669"/>
    <property type="project" value="UniProtKB-UniRule"/>
</dbReference>
<dbReference type="GO" id="GO:0032259">
    <property type="term" value="P:methylation"/>
    <property type="evidence" value="ECO:0007669"/>
    <property type="project" value="UniProtKB-KW"/>
</dbReference>
<dbReference type="Gene3D" id="3.30.2110.10">
    <property type="entry name" value="CbiD-like"/>
    <property type="match status" value="1"/>
</dbReference>
<dbReference type="HAMAP" id="MF_00787">
    <property type="entry name" value="CbiD"/>
    <property type="match status" value="1"/>
</dbReference>
<dbReference type="InterPro" id="IPR002748">
    <property type="entry name" value="CbiD"/>
</dbReference>
<dbReference type="InterPro" id="IPR036074">
    <property type="entry name" value="CbiD_sf"/>
</dbReference>
<dbReference type="NCBIfam" id="TIGR00312">
    <property type="entry name" value="cbiD"/>
    <property type="match status" value="1"/>
</dbReference>
<dbReference type="PANTHER" id="PTHR35863">
    <property type="entry name" value="COBALT-PRECORRIN-5B C(1)-METHYLTRANSFERASE"/>
    <property type="match status" value="1"/>
</dbReference>
<dbReference type="PANTHER" id="PTHR35863:SF1">
    <property type="entry name" value="COBALT-PRECORRIN-5B C(1)-METHYLTRANSFERASE"/>
    <property type="match status" value="1"/>
</dbReference>
<dbReference type="Pfam" id="PF01888">
    <property type="entry name" value="CbiD"/>
    <property type="match status" value="1"/>
</dbReference>
<dbReference type="PIRSF" id="PIRSF026782">
    <property type="entry name" value="CbiD"/>
    <property type="match status" value="1"/>
</dbReference>
<dbReference type="SUPFAM" id="SSF111342">
    <property type="entry name" value="CbiD-like"/>
    <property type="match status" value="1"/>
</dbReference>
<sequence length="379" mass="40800">MSELSFDAPVWHHGKALRKGYTTGSCATAAAKVAALMVLRQHLIHQVSIVTPSGVTLCLNVESPHIEGQQAIAAIRKDGGDDVDATHGMLIFARVTLNDSGEITLTGGEGIGTVTRKGIGLPLGSAAINRTPRHTIESAVREAIGPARGADVEIFAPEGEARAQKTYNSRLGILGGISIIGTTGIVTPMSEESWKRSLSLELEIKRASGLTRVILVPGNHGERFVREQMGVDTQAVVTMSNFVGYMIEEAVRLGFCQIVLVGHPGKLIKIAAGIFHTHSHIADARMETLVAHLALLGAPLELLTLVSDCDTTEAAMEHIEAYGFGHIYNHLARRICLRVMQMLRFTKTPPVCDAILFSFDNHILGSNRPVDEIAKELQC</sequence>
<gene>
    <name evidence="1" type="primary">cbiD</name>
    <name type="ordered locus">SNSL254_A2208</name>
</gene>
<keyword id="KW-0169">Cobalamin biosynthesis</keyword>
<keyword id="KW-0489">Methyltransferase</keyword>
<keyword id="KW-0949">S-adenosyl-L-methionine</keyword>
<keyword id="KW-0808">Transferase</keyword>
<proteinExistence type="inferred from homology"/>
<reference key="1">
    <citation type="journal article" date="2011" name="J. Bacteriol.">
        <title>Comparative genomics of 28 Salmonella enterica isolates: evidence for CRISPR-mediated adaptive sublineage evolution.</title>
        <authorList>
            <person name="Fricke W.F."/>
            <person name="Mammel M.K."/>
            <person name="McDermott P.F."/>
            <person name="Tartera C."/>
            <person name="White D.G."/>
            <person name="Leclerc J.E."/>
            <person name="Ravel J."/>
            <person name="Cebula T.A."/>
        </authorList>
    </citation>
    <scope>NUCLEOTIDE SEQUENCE [LARGE SCALE GENOMIC DNA]</scope>
    <source>
        <strain>SL254</strain>
    </source>
</reference>
<organism>
    <name type="scientific">Salmonella newport (strain SL254)</name>
    <dbReference type="NCBI Taxonomy" id="423368"/>
    <lineage>
        <taxon>Bacteria</taxon>
        <taxon>Pseudomonadati</taxon>
        <taxon>Pseudomonadota</taxon>
        <taxon>Gammaproteobacteria</taxon>
        <taxon>Enterobacterales</taxon>
        <taxon>Enterobacteriaceae</taxon>
        <taxon>Salmonella</taxon>
    </lineage>
</organism>
<comment type="function">
    <text evidence="1">Catalyzes the methylation of C-1 in cobalt-precorrin-5B to form cobalt-precorrin-6A.</text>
</comment>
<comment type="catalytic activity">
    <reaction evidence="1">
        <text>Co-precorrin-5B + S-adenosyl-L-methionine = Co-precorrin-6A + S-adenosyl-L-homocysteine</text>
        <dbReference type="Rhea" id="RHEA:26285"/>
        <dbReference type="ChEBI" id="CHEBI:57856"/>
        <dbReference type="ChEBI" id="CHEBI:59789"/>
        <dbReference type="ChEBI" id="CHEBI:60063"/>
        <dbReference type="ChEBI" id="CHEBI:60064"/>
        <dbReference type="EC" id="2.1.1.195"/>
    </reaction>
</comment>
<comment type="pathway">
    <text evidence="1">Cofactor biosynthesis; adenosylcobalamin biosynthesis; cob(II)yrinate a,c-diamide from sirohydrochlorin (anaerobic route): step 6/10.</text>
</comment>
<comment type="similarity">
    <text evidence="1">Belongs to the CbiD family.</text>
</comment>